<protein>
    <recommendedName>
        <fullName>Ragulator complex protein LAMTOR2</fullName>
    </recommendedName>
    <alternativeName>
        <fullName>Late endosomal/lysosomal adaptor and MAPK and MTOR activator 2</fullName>
    </alternativeName>
</protein>
<sequence>MLRPKALTQVLSQANTSGVQSTLLLNNEGSLLAYSGYGDTDARVTAAIASNIWSAYDKNGHQAFNEDKLKFILMDCMEGRVAITRVANLLLCMYAKETVGFGMLKAKAEALVLYLEEPLTQVAAS</sequence>
<comment type="function">
    <text evidence="3">As part of the Ragulator complex it is involved in amino acid sensing and activation of mTORC1, a signaling complex promoting cell growth in response to growth factors, energy levels, and amino acids. Activated by amino acids through a mechanism involving the lysosomal V-ATPase, the Ragulator plays a dual role for the small GTPases Rag (RagA/RRAGA, RagB/RRAGB, RagC/RRAGC and/or RagD/RRAGD): it (1) acts as a guanine nucleotide exchange factor (GEF), activating the small GTPases Rag and (2) mediates recruitment of Rag GTPases to the lysosome membrane. Activated Ragulator and Rag GTPases function as a scaffold recruiting mTORC1 to lysosomes where it is in turn activated.</text>
</comment>
<comment type="subunit">
    <text evidence="3">Part of the Ragulator complex composed of lamtor1, lamtor2, lamtor3, lamtor4 and lamtor5. The Ragulator complex interacts with slc38a9; the probable amino acid sensor. Component of the lysosomal folliculin complex (LFC).</text>
</comment>
<comment type="subcellular location">
    <subcellularLocation>
        <location evidence="2">Late endosome membrane</location>
        <topology evidence="2">Peripheral membrane protein</topology>
        <orientation evidence="2">Cytoplasmic side</orientation>
    </subcellularLocation>
    <subcellularLocation>
        <location evidence="2">Lysosome membrane</location>
        <topology evidence="2">Peripheral membrane protein</topology>
        <orientation evidence="2">Cytoplasmic side</orientation>
    </subcellularLocation>
    <text evidence="2">Recruited to lysosome and endosome membranes by LAMTOR1.</text>
</comment>
<comment type="similarity">
    <text evidence="4">Belongs to the GAMAD family.</text>
</comment>
<name>LTOR2_SALSA</name>
<gene>
    <name type="primary">lamtor2</name>
</gene>
<keyword id="KW-0967">Endosome</keyword>
<keyword id="KW-0458">Lysosome</keyword>
<keyword id="KW-0472">Membrane</keyword>
<keyword id="KW-1185">Reference proteome</keyword>
<organism>
    <name type="scientific">Salmo salar</name>
    <name type="common">Atlantic salmon</name>
    <dbReference type="NCBI Taxonomy" id="8030"/>
    <lineage>
        <taxon>Eukaryota</taxon>
        <taxon>Metazoa</taxon>
        <taxon>Chordata</taxon>
        <taxon>Craniata</taxon>
        <taxon>Vertebrata</taxon>
        <taxon>Euteleostomi</taxon>
        <taxon>Actinopterygii</taxon>
        <taxon>Neopterygii</taxon>
        <taxon>Teleostei</taxon>
        <taxon>Protacanthopterygii</taxon>
        <taxon>Salmoniformes</taxon>
        <taxon>Salmonidae</taxon>
        <taxon>Salmoninae</taxon>
        <taxon>Salmo</taxon>
    </lineage>
</organism>
<evidence type="ECO:0000250" key="1"/>
<evidence type="ECO:0000250" key="2">
    <source>
        <dbReference type="UniProtKB" id="Q9JHS3"/>
    </source>
</evidence>
<evidence type="ECO:0000250" key="3">
    <source>
        <dbReference type="UniProtKB" id="Q9Y2Q5"/>
    </source>
</evidence>
<evidence type="ECO:0000305" key="4"/>
<reference key="1">
    <citation type="journal article" date="2010" name="BMC Genomics">
        <title>Salmo salar and Esox lucius full-length cDNA sequences reveal changes in evolutionary pressures on a post-tetraploidization genome.</title>
        <authorList>
            <person name="Leong J.S."/>
            <person name="Jantzen S.G."/>
            <person name="von Schalburg K.R."/>
            <person name="Cooper G.A."/>
            <person name="Messmer A.M."/>
            <person name="Liao N.Y."/>
            <person name="Munro S."/>
            <person name="Moore R."/>
            <person name="Holt R.A."/>
            <person name="Jones S.J."/>
            <person name="Davidson W.S."/>
            <person name="Koop B.F."/>
        </authorList>
    </citation>
    <scope>NUCLEOTIDE SEQUENCE [LARGE SCALE MRNA]</scope>
    <source>
        <tissue>Brain</tissue>
    </source>
</reference>
<dbReference type="EMBL" id="BT047143">
    <property type="protein sequence ID" value="ACI66944.1"/>
    <property type="molecule type" value="mRNA"/>
</dbReference>
<dbReference type="EMBL" id="BT047817">
    <property type="protein sequence ID" value="ACI67618.1"/>
    <property type="molecule type" value="mRNA"/>
</dbReference>
<dbReference type="EMBL" id="BT047883">
    <property type="protein sequence ID" value="ACI67684.1"/>
    <property type="molecule type" value="mRNA"/>
</dbReference>
<dbReference type="EMBL" id="BT048025">
    <property type="protein sequence ID" value="ACI67826.1"/>
    <property type="molecule type" value="mRNA"/>
</dbReference>
<dbReference type="EMBL" id="BT049008">
    <property type="protein sequence ID" value="ACI68809.1"/>
    <property type="molecule type" value="mRNA"/>
</dbReference>
<dbReference type="EMBL" id="BT049017">
    <property type="protein sequence ID" value="ACI68818.1"/>
    <property type="molecule type" value="mRNA"/>
</dbReference>
<dbReference type="SMR" id="B5X7X4"/>
<dbReference type="STRING" id="8030.ENSSSAP00000017241"/>
<dbReference type="PaxDb" id="8030-ENSSSAP00000017241"/>
<dbReference type="Ensembl" id="ENSSSAT00070038673">
    <property type="protein sequence ID" value="ENSSSAP00070036918"/>
    <property type="gene ID" value="ENSSSAG00070024247"/>
</dbReference>
<dbReference type="Ensembl" id="ENSSSAT00070045358">
    <property type="protein sequence ID" value="ENSSSAP00070043464"/>
    <property type="gene ID" value="ENSSSAG00070028281"/>
</dbReference>
<dbReference type="KEGG" id="sasa:106580651"/>
<dbReference type="KEGG" id="sasa:106605307"/>
<dbReference type="OrthoDB" id="139888at7898"/>
<dbReference type="Proteomes" id="UP000087266">
    <property type="component" value="Chromosome ssa02"/>
</dbReference>
<dbReference type="Proteomes" id="UP000087266">
    <property type="component" value="Chromosome ssa05"/>
</dbReference>
<dbReference type="Bgee" id="ENSSSAG00000008231">
    <property type="expression patterns" value="Expressed in ovary and 26 other cell types or tissues"/>
</dbReference>
<dbReference type="GO" id="GO:0005770">
    <property type="term" value="C:late endosome"/>
    <property type="evidence" value="ECO:0000250"/>
    <property type="project" value="UniProtKB"/>
</dbReference>
<dbReference type="GO" id="GO:0031902">
    <property type="term" value="C:late endosome membrane"/>
    <property type="evidence" value="ECO:0007669"/>
    <property type="project" value="UniProtKB-SubCell"/>
</dbReference>
<dbReference type="GO" id="GO:0005765">
    <property type="term" value="C:lysosomal membrane"/>
    <property type="evidence" value="ECO:0000250"/>
    <property type="project" value="UniProtKB"/>
</dbReference>
<dbReference type="GO" id="GO:0071986">
    <property type="term" value="C:Ragulator complex"/>
    <property type="evidence" value="ECO:0000250"/>
    <property type="project" value="UniProtKB"/>
</dbReference>
<dbReference type="GO" id="GO:0005085">
    <property type="term" value="F:guanyl-nucleotide exchange factor activity"/>
    <property type="evidence" value="ECO:0007669"/>
    <property type="project" value="InterPro"/>
</dbReference>
<dbReference type="GO" id="GO:0060090">
    <property type="term" value="F:molecular adaptor activity"/>
    <property type="evidence" value="ECO:0007669"/>
    <property type="project" value="InterPro"/>
</dbReference>
<dbReference type="GO" id="GO:0071230">
    <property type="term" value="P:cellular response to amino acid stimulus"/>
    <property type="evidence" value="ECO:0000250"/>
    <property type="project" value="UniProtKB"/>
</dbReference>
<dbReference type="GO" id="GO:0032008">
    <property type="term" value="P:positive regulation of TOR signaling"/>
    <property type="evidence" value="ECO:0000250"/>
    <property type="project" value="UniProtKB"/>
</dbReference>
<dbReference type="GO" id="GO:1904263">
    <property type="term" value="P:positive regulation of TORC1 signaling"/>
    <property type="evidence" value="ECO:0000250"/>
    <property type="project" value="UniProtKB"/>
</dbReference>
<dbReference type="GO" id="GO:0008104">
    <property type="term" value="P:protein localization"/>
    <property type="evidence" value="ECO:0000250"/>
    <property type="project" value="UniProtKB"/>
</dbReference>
<dbReference type="GO" id="GO:0001558">
    <property type="term" value="P:regulation of cell growth"/>
    <property type="evidence" value="ECO:0000250"/>
    <property type="project" value="UniProtKB"/>
</dbReference>
<dbReference type="FunFam" id="3.30.450.30:FF:000004">
    <property type="entry name" value="ragulator complex protein LAMTOR2"/>
    <property type="match status" value="1"/>
</dbReference>
<dbReference type="Gene3D" id="3.30.450.30">
    <property type="entry name" value="Dynein light chain 2a, cytoplasmic"/>
    <property type="match status" value="1"/>
</dbReference>
<dbReference type="InterPro" id="IPR037587">
    <property type="entry name" value="LAMTOR2-like"/>
</dbReference>
<dbReference type="InterPro" id="IPR004942">
    <property type="entry name" value="Roadblock/LAMTOR2_dom"/>
</dbReference>
<dbReference type="PANTHER" id="PTHR13323">
    <property type="entry name" value="LATE ENDOSOMAL/LYSOSOMAL MP1 INTERACTING PROTEIN"/>
    <property type="match status" value="1"/>
</dbReference>
<dbReference type="Pfam" id="PF03259">
    <property type="entry name" value="Robl_LC7"/>
    <property type="match status" value="1"/>
</dbReference>
<dbReference type="SMART" id="SM00960">
    <property type="entry name" value="Robl_LC7"/>
    <property type="match status" value="1"/>
</dbReference>
<dbReference type="SUPFAM" id="SSF103196">
    <property type="entry name" value="Roadblock/LC7 domain"/>
    <property type="match status" value="1"/>
</dbReference>
<feature type="chain" id="PRO_0000365941" description="Ragulator complex protein LAMTOR2">
    <location>
        <begin position="1"/>
        <end position="125"/>
    </location>
</feature>
<feature type="region of interest" description="Required for location at endosomes" evidence="1">
    <location>
        <begin position="57"/>
        <end position="70"/>
    </location>
</feature>
<proteinExistence type="evidence at transcript level"/>
<accession>B5X7X4</accession>